<name>CHSTE_HUMAN</name>
<feature type="chain" id="PRO_0000189672" description="Carbohydrate sulfotransferase 14">
    <location>
        <begin position="1"/>
        <end position="376"/>
    </location>
</feature>
<feature type="topological domain" description="Cytoplasmic" evidence="2">
    <location>
        <begin position="1"/>
        <end position="39"/>
    </location>
</feature>
<feature type="transmembrane region" description="Helical; Signal-anchor for type II membrane protein" evidence="2">
    <location>
        <begin position="40"/>
        <end position="60"/>
    </location>
</feature>
<feature type="topological domain" description="Lumenal" evidence="2">
    <location>
        <begin position="61"/>
        <end position="376"/>
    </location>
</feature>
<feature type="binding site" evidence="1">
    <location>
        <begin position="155"/>
        <end position="161"/>
    </location>
    <ligand>
        <name>3'-phosphoadenylyl sulfate</name>
        <dbReference type="ChEBI" id="CHEBI:58339"/>
    </ligand>
</feature>
<feature type="binding site" evidence="1">
    <location>
        <begin position="213"/>
        <end position="221"/>
    </location>
    <ligand>
        <name>3'-phosphoadenylyl sulfate</name>
        <dbReference type="ChEBI" id="CHEBI:58339"/>
    </ligand>
</feature>
<feature type="glycosylation site" description="N-linked (GlcNAc...) asparagine" evidence="2">
    <location>
        <position position="110"/>
    </location>
</feature>
<feature type="glycosylation site" description="N-linked (GlcNAc...) asparagine" evidence="2">
    <location>
        <position position="368"/>
    </location>
</feature>
<feature type="sequence variant" id="VAR_063754" description="In EDSMC1; associated in a complex allele with Q-137; results in altered intracellular processing; dbSNP:rs267606727." evidence="5">
    <original>R</original>
    <variation>G</variation>
    <location>
        <position position="135"/>
    </location>
</feature>
<feature type="sequence variant" id="VAR_063755" description="In EDSMC1; associated in a complex allele with G-135; results in altered intracellular processing; dbSNP:rs267606728." evidence="5">
    <original>L</original>
    <variation>Q</variation>
    <location>
        <position position="137"/>
    </location>
</feature>
<feature type="sequence variant" id="VAR_063756" description="In EDSMC1; results in altered intracellular processing; dbSNP:rs121908257." evidence="5">
    <original>R</original>
    <variation>P</variation>
    <location>
        <position position="213"/>
    </location>
</feature>
<feature type="sequence variant" id="VAR_064555" description="In EDSMC1; loss of activity; dbSNP:rs267606729." evidence="6">
    <original>P</original>
    <variation>L</variation>
    <location>
        <position position="281"/>
    </location>
</feature>
<feature type="sequence variant" id="VAR_064556" description="In EDSMC1; loss of activity; dbSNP:rs267606731." evidence="6">
    <original>C</original>
    <variation>S</variation>
    <location>
        <position position="289"/>
    </location>
</feature>
<feature type="sequence variant" id="VAR_063757" description="In EDSMC1; results in altered intracellular processing; loss of activity; dbSNP:rs121908258." evidence="5 6">
    <original>Y</original>
    <variation>C</variation>
    <location>
        <position position="293"/>
    </location>
</feature>
<feature type="sequence conflict" description="In Ref. 4; BAC11172." evidence="8" ref="4">
    <original>R</original>
    <variation>L</variation>
    <location>
        <position position="195"/>
    </location>
</feature>
<feature type="sequence conflict" description="In Ref. 4; BAC11172." evidence="8" ref="4">
    <original>E</original>
    <variation>D</variation>
    <location>
        <position position="214"/>
    </location>
</feature>
<reference key="1">
    <citation type="journal article" date="2001" name="J. Biol. Chem.">
        <title>Molecular cloning and characterization of a dermatan-specific N-acetylgalactosamine 4-O-sulfotransferase.</title>
        <authorList>
            <person name="Evers M.R."/>
            <person name="Xia G."/>
            <person name="Kang H.-G."/>
            <person name="Schachner M."/>
            <person name="Baenziger J.U."/>
        </authorList>
    </citation>
    <scope>NUCLEOTIDE SEQUENCE [MRNA]</scope>
    <scope>ENZYME ACTIVITY</scope>
    <scope>TISSUE SPECIFICITY</scope>
</reference>
<reference key="2">
    <citation type="journal article" date="2003" name="J. Biol. Chem.">
        <title>Specificities of three distinct human chondroitin/dermatan N-acetylgalactosamine 4-O-sulfotransferases demonstrated using partially desulfated dermatan sulfate as an acceptor. Implication of differential roles in dermatan sulfate biosynthesis.</title>
        <authorList>
            <person name="Mikami T."/>
            <person name="Mizumoto S."/>
            <person name="Kago N."/>
            <person name="Kitagawa H."/>
            <person name="Sugahara K."/>
        </authorList>
    </citation>
    <scope>NUCLEOTIDE SEQUENCE [MRNA]</scope>
    <scope>SUBSTRATE SPECIFICITY</scope>
</reference>
<reference key="3">
    <citation type="submission" date="2005-01" db="EMBL/GenBank/DDBJ databases">
        <authorList>
            <person name="Hiraoka N."/>
            <person name="Fukuda M."/>
        </authorList>
    </citation>
    <scope>NUCLEOTIDE SEQUENCE [MRNA]</scope>
</reference>
<reference key="4">
    <citation type="journal article" date="2004" name="Nat. Genet.">
        <title>Complete sequencing and characterization of 21,243 full-length human cDNAs.</title>
        <authorList>
            <person name="Ota T."/>
            <person name="Suzuki Y."/>
            <person name="Nishikawa T."/>
            <person name="Otsuki T."/>
            <person name="Sugiyama T."/>
            <person name="Irie R."/>
            <person name="Wakamatsu A."/>
            <person name="Hayashi K."/>
            <person name="Sato H."/>
            <person name="Nagai K."/>
            <person name="Kimura K."/>
            <person name="Makita H."/>
            <person name="Sekine M."/>
            <person name="Obayashi M."/>
            <person name="Nishi T."/>
            <person name="Shibahara T."/>
            <person name="Tanaka T."/>
            <person name="Ishii S."/>
            <person name="Yamamoto J."/>
            <person name="Saito K."/>
            <person name="Kawai Y."/>
            <person name="Isono Y."/>
            <person name="Nakamura Y."/>
            <person name="Nagahari K."/>
            <person name="Murakami K."/>
            <person name="Yasuda T."/>
            <person name="Iwayanagi T."/>
            <person name="Wagatsuma M."/>
            <person name="Shiratori A."/>
            <person name="Sudo H."/>
            <person name="Hosoiri T."/>
            <person name="Kaku Y."/>
            <person name="Kodaira H."/>
            <person name="Kondo H."/>
            <person name="Sugawara M."/>
            <person name="Takahashi M."/>
            <person name="Kanda K."/>
            <person name="Yokoi T."/>
            <person name="Furuya T."/>
            <person name="Kikkawa E."/>
            <person name="Omura Y."/>
            <person name="Abe K."/>
            <person name="Kamihara K."/>
            <person name="Katsuta N."/>
            <person name="Sato K."/>
            <person name="Tanikawa M."/>
            <person name="Yamazaki M."/>
            <person name="Ninomiya K."/>
            <person name="Ishibashi T."/>
            <person name="Yamashita H."/>
            <person name="Murakawa K."/>
            <person name="Fujimori K."/>
            <person name="Tanai H."/>
            <person name="Kimata M."/>
            <person name="Watanabe M."/>
            <person name="Hiraoka S."/>
            <person name="Chiba Y."/>
            <person name="Ishida S."/>
            <person name="Ono Y."/>
            <person name="Takiguchi S."/>
            <person name="Watanabe S."/>
            <person name="Yosida M."/>
            <person name="Hotuta T."/>
            <person name="Kusano J."/>
            <person name="Kanehori K."/>
            <person name="Takahashi-Fujii A."/>
            <person name="Hara H."/>
            <person name="Tanase T.-O."/>
            <person name="Nomura Y."/>
            <person name="Togiya S."/>
            <person name="Komai F."/>
            <person name="Hara R."/>
            <person name="Takeuchi K."/>
            <person name="Arita M."/>
            <person name="Imose N."/>
            <person name="Musashino K."/>
            <person name="Yuuki H."/>
            <person name="Oshima A."/>
            <person name="Sasaki N."/>
            <person name="Aotsuka S."/>
            <person name="Yoshikawa Y."/>
            <person name="Matsunawa H."/>
            <person name="Ichihara T."/>
            <person name="Shiohata N."/>
            <person name="Sano S."/>
            <person name="Moriya S."/>
            <person name="Momiyama H."/>
            <person name="Satoh N."/>
            <person name="Takami S."/>
            <person name="Terashima Y."/>
            <person name="Suzuki O."/>
            <person name="Nakagawa S."/>
            <person name="Senoh A."/>
            <person name="Mizoguchi H."/>
            <person name="Goto Y."/>
            <person name="Shimizu F."/>
            <person name="Wakebe H."/>
            <person name="Hishigaki H."/>
            <person name="Watanabe T."/>
            <person name="Sugiyama A."/>
            <person name="Takemoto M."/>
            <person name="Kawakami B."/>
            <person name="Yamazaki M."/>
            <person name="Watanabe K."/>
            <person name="Kumagai A."/>
            <person name="Itakura S."/>
            <person name="Fukuzumi Y."/>
            <person name="Fujimori Y."/>
            <person name="Komiyama M."/>
            <person name="Tashiro H."/>
            <person name="Tanigami A."/>
            <person name="Fujiwara T."/>
            <person name="Ono T."/>
            <person name="Yamada K."/>
            <person name="Fujii Y."/>
            <person name="Ozaki K."/>
            <person name="Hirao M."/>
            <person name="Ohmori Y."/>
            <person name="Kawabata A."/>
            <person name="Hikiji T."/>
            <person name="Kobatake N."/>
            <person name="Inagaki H."/>
            <person name="Ikema Y."/>
            <person name="Okamoto S."/>
            <person name="Okitani R."/>
            <person name="Kawakami T."/>
            <person name="Noguchi S."/>
            <person name="Itoh T."/>
            <person name="Shigeta K."/>
            <person name="Senba T."/>
            <person name="Matsumura K."/>
            <person name="Nakajima Y."/>
            <person name="Mizuno T."/>
            <person name="Morinaga M."/>
            <person name="Sasaki M."/>
            <person name="Togashi T."/>
            <person name="Oyama M."/>
            <person name="Hata H."/>
            <person name="Watanabe M."/>
            <person name="Komatsu T."/>
            <person name="Mizushima-Sugano J."/>
            <person name="Satoh T."/>
            <person name="Shirai Y."/>
            <person name="Takahashi Y."/>
            <person name="Nakagawa K."/>
            <person name="Okumura K."/>
            <person name="Nagase T."/>
            <person name="Nomura N."/>
            <person name="Kikuchi H."/>
            <person name="Masuho Y."/>
            <person name="Yamashita R."/>
            <person name="Nakai K."/>
            <person name="Yada T."/>
            <person name="Nakamura Y."/>
            <person name="Ohara O."/>
            <person name="Isogai T."/>
            <person name="Sugano S."/>
        </authorList>
    </citation>
    <scope>NUCLEOTIDE SEQUENCE [LARGE SCALE MRNA]</scope>
    <source>
        <tissue>Teratocarcinoma</tissue>
    </source>
</reference>
<reference key="5">
    <citation type="journal article" date="2004" name="Genome Res.">
        <title>The status, quality, and expansion of the NIH full-length cDNA project: the Mammalian Gene Collection (MGC).</title>
        <authorList>
            <consortium name="The MGC Project Team"/>
        </authorList>
    </citation>
    <scope>NUCLEOTIDE SEQUENCE [LARGE SCALE MRNA]</scope>
    <source>
        <tissue>Lung</tissue>
        <tissue>Uterus</tissue>
    </source>
</reference>
<reference key="6">
    <citation type="journal article" date="2003" name="Genome Res.">
        <title>The secreted protein discovery initiative (SPDI), a large-scale effort to identify novel human secreted and transmembrane proteins: a bioinformatics assessment.</title>
        <authorList>
            <person name="Clark H.F."/>
            <person name="Gurney A.L."/>
            <person name="Abaya E."/>
            <person name="Baker K."/>
            <person name="Baldwin D.T."/>
            <person name="Brush J."/>
            <person name="Chen J."/>
            <person name="Chow B."/>
            <person name="Chui C."/>
            <person name="Crowley C."/>
            <person name="Currell B."/>
            <person name="Deuel B."/>
            <person name="Dowd P."/>
            <person name="Eaton D."/>
            <person name="Foster J.S."/>
            <person name="Grimaldi C."/>
            <person name="Gu Q."/>
            <person name="Hass P.E."/>
            <person name="Heldens S."/>
            <person name="Huang A."/>
            <person name="Kim H.S."/>
            <person name="Klimowski L."/>
            <person name="Jin Y."/>
            <person name="Johnson S."/>
            <person name="Lee J."/>
            <person name="Lewis L."/>
            <person name="Liao D."/>
            <person name="Mark M.R."/>
            <person name="Robbie E."/>
            <person name="Sanchez C."/>
            <person name="Schoenfeld J."/>
            <person name="Seshagiri S."/>
            <person name="Simmons L."/>
            <person name="Singh J."/>
            <person name="Smith V."/>
            <person name="Stinson J."/>
            <person name="Vagts A."/>
            <person name="Vandlen R.L."/>
            <person name="Watanabe C."/>
            <person name="Wieand D."/>
            <person name="Woods K."/>
            <person name="Xie M.-H."/>
            <person name="Yansura D.G."/>
            <person name="Yi S."/>
            <person name="Yu G."/>
            <person name="Yuan J."/>
            <person name="Zhang M."/>
            <person name="Zhang Z."/>
            <person name="Goddard A.D."/>
            <person name="Wood W.I."/>
            <person name="Godowski P.J."/>
            <person name="Gray A.M."/>
        </authorList>
    </citation>
    <scope>NUCLEOTIDE SEQUENCE [LARGE SCALE MRNA] OF 36-376</scope>
</reference>
<reference key="7">
    <citation type="journal article" date="2009" name="Glycobiology">
        <title>Dermatan 4-O-sulfotransferase 1 is pivotal in the formation of iduronic acid blocks in dermatan sulfate.</title>
        <authorList>
            <person name="Pacheco B."/>
            <person name="Maccarana M."/>
            <person name="Malmstrom A."/>
        </authorList>
    </citation>
    <scope>CATALYTIC ACTIVITY</scope>
    <scope>FUNCTION</scope>
</reference>
<reference key="8">
    <citation type="journal article" date="2010" name="Hum. Mutat.">
        <title>Musculocontractural Ehlers-Danlos syndrome (former EDS type VIB) and adducted thumb clubfoot syndrome (ATCS) represent a single clinical entity caused by mutations in the dermatan-4-sulfotransferase 1 encoding CHST14 gene.</title>
        <authorList>
            <person name="Malfait F."/>
            <person name="Syx D."/>
            <person name="Vlummens P."/>
            <person name="Symoens S."/>
            <person name="Nampoothiri S."/>
            <person name="Hermanns-Le T."/>
            <person name="Van Laer L."/>
            <person name="De Paepe A."/>
        </authorList>
    </citation>
    <scope>INVOLVEMENT IN EDSMC1</scope>
</reference>
<reference key="9">
    <citation type="journal article" date="2009" name="Am. J. Hum. Genet.">
        <title>Loss of dermatan-4-sulfotransferase 1 function results in adducted thumb-clubfoot syndrome.</title>
        <authorList>
            <person name="Dundar M."/>
            <person name="Muller T."/>
            <person name="Zhang Q."/>
            <person name="Pan J."/>
            <person name="Steinmann B."/>
            <person name="Vodopiutz J."/>
            <person name="Gruber R."/>
            <person name="Sonoda T."/>
            <person name="Krabichler B."/>
            <person name="Utermann G."/>
            <person name="Baenziger J.U."/>
            <person name="Zhang L."/>
            <person name="Janecke A.R."/>
        </authorList>
    </citation>
    <scope>VARIANTS EDSMC1 GLY-135; GLN-137; PRO-213 AND CYS-293</scope>
    <scope>CHARACTERIZATION OF VARIANTS EDSMC1 GLY-135; GLN-137; PRO-213 AND CYS-293</scope>
</reference>
<reference key="10">
    <citation type="journal article" date="2010" name="Hum. Mutat.">
        <title>Loss-of-function mutations of CHST14 in a new type of Ehlers-Danlos syndrome.</title>
        <authorList>
            <person name="Miyake N."/>
            <person name="Kosho T."/>
            <person name="Mizumoto S."/>
            <person name="Furuichi T."/>
            <person name="Hatamochi A."/>
            <person name="Nagashima Y."/>
            <person name="Arai E."/>
            <person name="Takahashi K."/>
            <person name="Kawamura R."/>
            <person name="Wakui K."/>
            <person name="Takahashi J."/>
            <person name="Kato H."/>
            <person name="Yasui H."/>
            <person name="Ishida T."/>
            <person name="Ohashi H."/>
            <person name="Nishimura G."/>
            <person name="Shiina M."/>
            <person name="Saitsu H."/>
            <person name="Tsurusaki Y."/>
            <person name="Doi H."/>
            <person name="Fukushima Y."/>
            <person name="Ikegawa S."/>
            <person name="Yamada S."/>
            <person name="Sugahara K."/>
            <person name="Matsumoto N."/>
        </authorList>
    </citation>
    <scope>VARIANTS EDSMC1 LEU-281; SER-289 AND CYS-293</scope>
    <scope>CHARACTERIZATION OF VARIANTS EDSMC1 LEU-281; SER-289 AND CYS-293</scope>
</reference>
<proteinExistence type="evidence at protein level"/>
<gene>
    <name type="primary">CHST14</name>
    <name type="synonym">D4ST1</name>
    <name type="ORF">UNQ1925/PRO4400</name>
</gene>
<protein>
    <recommendedName>
        <fullName>Carbohydrate sulfotransferase 14</fullName>
        <ecNumber>2.8.2.35</ecNumber>
    </recommendedName>
    <alternativeName>
        <fullName>Dermatan 4-sulfotransferase 1</fullName>
        <shortName>D4ST-1</shortName>
        <shortName>hD4ST1</shortName>
    </alternativeName>
</protein>
<accession>Q8NCH0</accession>
<accession>Q6PJ31</accession>
<accession>Q6UXA0</accession>
<accession>Q96P94</accession>
<comment type="function">
    <text evidence="4">Catalyzes the transfer of sulfate to position 4 of the N-acetylgalactosamine (GalNAc) residue of dermatan sulfate. Plays a pivotal role in the formation of 4-0-sulfated IdoA blocks in dermatan sulfate. Transfers sulfate to the C-4 hydroxyl of beta1,4-linked GalNAc that is substituted with an alpha-linked iduronic acid (IdoUA) at the C-3 hydroxyl. Transfers sulfate more efficiently to GalNAc residues in -IdoUA-GalNAc-IdoUA- than in -GlcUA-GalNAc-GlcUA-sequences. Has preference for partially desulfated dermatan sulfate. Addition of sulfate to GalNAc may occur immediately after epimerization of GlcUA to IdoUA. Appears to have an important role in the formation of the cerebellar neural network during postnatal brain development.</text>
</comment>
<comment type="catalytic activity">
    <reaction evidence="3 4">
        <text>dermatan + n 3'-phosphoadenylyl sulfate = dermatan 4'-sulfate + n adenosine 3',5'-bisphosphate + n H(+)</text>
        <dbReference type="Rhea" id="RHEA:48052"/>
        <dbReference type="Rhea" id="RHEA-COMP:9965"/>
        <dbReference type="Rhea" id="RHEA-COMP:11986"/>
        <dbReference type="ChEBI" id="CHEBI:15378"/>
        <dbReference type="ChEBI" id="CHEBI:58339"/>
        <dbReference type="ChEBI" id="CHEBI:58343"/>
        <dbReference type="ChEBI" id="CHEBI:58465"/>
        <dbReference type="ChEBI" id="CHEBI:60059"/>
        <dbReference type="EC" id="2.8.2.35"/>
    </reaction>
</comment>
<comment type="interaction">
    <interactant intactId="EBI-21717278">
        <id>Q8NCH0</id>
    </interactant>
    <interactant intactId="EBI-349854">
        <id>P13569</id>
        <label>CFTR</label>
    </interactant>
    <organismsDiffer>false</organismsDiffer>
    <experiments>3</experiments>
</comment>
<comment type="subcellular location">
    <subcellularLocation>
        <location evidence="1">Golgi apparatus membrane</location>
        <topology evidence="1">Single-pass type II membrane protein</topology>
    </subcellularLocation>
</comment>
<comment type="tissue specificity">
    <text evidence="3">Widely expressed. Expressed at high level in pituitary gland, placenta, uterus and thyroid.</text>
</comment>
<comment type="disease" evidence="5 6 7">
    <disease id="DI-02810">
        <name>Ehlers-Danlos syndrome, musculocontractural type 1</name>
        <acronym>EDSMC1</acronym>
        <description>A form of Ehlers-Danlos syndrome characterized by distinctive craniofacial dysmorphism, congenital contractures of thumbs and fingers, clubfeet, severe kyphoscoliosis, muscular hypotonia, hyperextensible thin skin with easy bruisability and atrophic scarring, wrinkled palms, joint hypermobility, and ocular involvement.</description>
        <dbReference type="MIM" id="601776"/>
    </disease>
    <text>The disease is caused by variants affecting the gene represented in this entry.</text>
</comment>
<comment type="similarity">
    <text evidence="8">Belongs to the sulfotransferase 2 family.</text>
</comment>
<comment type="sequence caution" evidence="8">
    <conflict type="erroneous initiation">
        <sequence resource="EMBL-CDS" id="AAQ88811"/>
    </conflict>
    <text>Truncated N-terminus.</text>
</comment>
<sequence length="376" mass="42997">MFPRPLTPLAAPNGAEPLGRALRRAPLGRARAGLGGPPLLLPSMLMFAVIVASSGLLLMIERGILAEMKPLPLHPPGREGTAWRGKAPKPGGLSLRAGDADLQVRQDVRNRTLRAVCGQPGMPRDPWDLPVGQRRTLLRHILVSDRYRFLYCYVPKVACSNWKRVMKVLAGVLDSVDVRLKMDHRSDLVFLADLRPEEIRYRLQHYFKFLFVREPLERLLSAYRNKFGEIREYQQRYGAEIVRRYRAGAGPSPAGDDVTFPEFLRYLVDEDPERMNEHWMPVYHLCQPCAVHYDFVGSYERLEADANQVLEWVRAPPHVRFPARQAWYRPASPESLHYHLCSAPRALLQDVLPKYILDFSLFAYPLPNVTKEACQQ</sequence>
<keyword id="KW-0119">Carbohydrate metabolism</keyword>
<keyword id="KW-0225">Disease variant</keyword>
<keyword id="KW-0248">Ehlers-Danlos syndrome</keyword>
<keyword id="KW-0325">Glycoprotein</keyword>
<keyword id="KW-0333">Golgi apparatus</keyword>
<keyword id="KW-0472">Membrane</keyword>
<keyword id="KW-1267">Proteomics identification</keyword>
<keyword id="KW-1185">Reference proteome</keyword>
<keyword id="KW-0735">Signal-anchor</keyword>
<keyword id="KW-0808">Transferase</keyword>
<keyword id="KW-0812">Transmembrane</keyword>
<keyword id="KW-1133">Transmembrane helix</keyword>
<evidence type="ECO:0000250" key="1"/>
<evidence type="ECO:0000255" key="2"/>
<evidence type="ECO:0000269" key="3">
    <source>
    </source>
</evidence>
<evidence type="ECO:0000269" key="4">
    <source>
    </source>
</evidence>
<evidence type="ECO:0000269" key="5">
    <source>
    </source>
</evidence>
<evidence type="ECO:0000269" key="6">
    <source>
    </source>
</evidence>
<evidence type="ECO:0000269" key="7">
    <source>
    </source>
</evidence>
<evidence type="ECO:0000305" key="8"/>
<organism>
    <name type="scientific">Homo sapiens</name>
    <name type="common">Human</name>
    <dbReference type="NCBI Taxonomy" id="9606"/>
    <lineage>
        <taxon>Eukaryota</taxon>
        <taxon>Metazoa</taxon>
        <taxon>Chordata</taxon>
        <taxon>Craniata</taxon>
        <taxon>Vertebrata</taxon>
        <taxon>Euteleostomi</taxon>
        <taxon>Mammalia</taxon>
        <taxon>Eutheria</taxon>
        <taxon>Euarchontoglires</taxon>
        <taxon>Primates</taxon>
        <taxon>Haplorrhini</taxon>
        <taxon>Catarrhini</taxon>
        <taxon>Hominidae</taxon>
        <taxon>Homo</taxon>
    </lineage>
</organism>
<dbReference type="EC" id="2.8.2.35"/>
<dbReference type="EMBL" id="AF401222">
    <property type="protein sequence ID" value="AAK92532.1"/>
    <property type="molecule type" value="mRNA"/>
</dbReference>
<dbReference type="EMBL" id="AB066595">
    <property type="protein sequence ID" value="BAB84097.1"/>
    <property type="molecule type" value="mRNA"/>
</dbReference>
<dbReference type="EMBL" id="AF282905">
    <property type="protein sequence ID" value="AAK69530.1"/>
    <property type="molecule type" value="mRNA"/>
</dbReference>
<dbReference type="EMBL" id="AK074739">
    <property type="protein sequence ID" value="BAC11172.1"/>
    <property type="molecule type" value="mRNA"/>
</dbReference>
<dbReference type="EMBL" id="BC023653">
    <property type="protein sequence ID" value="AAH23653.1"/>
    <property type="molecule type" value="mRNA"/>
</dbReference>
<dbReference type="EMBL" id="BC049214">
    <property type="protein sequence ID" value="AAH49214.1"/>
    <property type="molecule type" value="mRNA"/>
</dbReference>
<dbReference type="EMBL" id="BC053633">
    <property type="protein sequence ID" value="AAH53633.1"/>
    <property type="molecule type" value="mRNA"/>
</dbReference>
<dbReference type="EMBL" id="AY358446">
    <property type="protein sequence ID" value="AAQ88811.1"/>
    <property type="status" value="ALT_INIT"/>
    <property type="molecule type" value="mRNA"/>
</dbReference>
<dbReference type="CCDS" id="CCDS10059.1"/>
<dbReference type="RefSeq" id="NP_569735.1">
    <property type="nucleotide sequence ID" value="NM_130468.4"/>
</dbReference>
<dbReference type="SMR" id="Q8NCH0"/>
<dbReference type="BioGRID" id="125232">
    <property type="interactions" value="122"/>
</dbReference>
<dbReference type="FunCoup" id="Q8NCH0">
    <property type="interactions" value="244"/>
</dbReference>
<dbReference type="IntAct" id="Q8NCH0">
    <property type="interactions" value="46"/>
</dbReference>
<dbReference type="MINT" id="Q8NCH0"/>
<dbReference type="STRING" id="9606.ENSP00000307297"/>
<dbReference type="GlyCosmos" id="Q8NCH0">
    <property type="glycosylation" value="2 sites, No reported glycans"/>
</dbReference>
<dbReference type="GlyGen" id="Q8NCH0">
    <property type="glycosylation" value="5 sites, 2 N-linked glycans (1 site), 2 O-linked glycans (3 sites)"/>
</dbReference>
<dbReference type="iPTMnet" id="Q8NCH0"/>
<dbReference type="PhosphoSitePlus" id="Q8NCH0"/>
<dbReference type="SwissPalm" id="Q8NCH0"/>
<dbReference type="BioMuta" id="CHST14"/>
<dbReference type="DMDM" id="61211839"/>
<dbReference type="jPOST" id="Q8NCH0"/>
<dbReference type="MassIVE" id="Q8NCH0"/>
<dbReference type="PaxDb" id="9606-ENSP00000307297"/>
<dbReference type="PeptideAtlas" id="Q8NCH0"/>
<dbReference type="ProteomicsDB" id="72895"/>
<dbReference type="Pumba" id="Q8NCH0"/>
<dbReference type="Antibodypedia" id="23111">
    <property type="antibodies" value="97 antibodies from 23 providers"/>
</dbReference>
<dbReference type="DNASU" id="113189"/>
<dbReference type="Ensembl" id="ENST00000306243.7">
    <property type="protein sequence ID" value="ENSP00000307297.6"/>
    <property type="gene ID" value="ENSG00000169105.8"/>
</dbReference>
<dbReference type="GeneID" id="113189"/>
<dbReference type="KEGG" id="hsa:113189"/>
<dbReference type="MANE-Select" id="ENST00000306243.7">
    <property type="protein sequence ID" value="ENSP00000307297.6"/>
    <property type="RefSeq nucleotide sequence ID" value="NM_130468.4"/>
    <property type="RefSeq protein sequence ID" value="NP_569735.1"/>
</dbReference>
<dbReference type="UCSC" id="uc001zlw.4">
    <property type="organism name" value="human"/>
</dbReference>
<dbReference type="AGR" id="HGNC:24464"/>
<dbReference type="CTD" id="113189"/>
<dbReference type="DisGeNET" id="113189"/>
<dbReference type="GeneCards" id="CHST14"/>
<dbReference type="HGNC" id="HGNC:24464">
    <property type="gene designation" value="CHST14"/>
</dbReference>
<dbReference type="HPA" id="ENSG00000169105">
    <property type="expression patterns" value="Low tissue specificity"/>
</dbReference>
<dbReference type="MalaCards" id="CHST14"/>
<dbReference type="MIM" id="601776">
    <property type="type" value="phenotype"/>
</dbReference>
<dbReference type="MIM" id="608429">
    <property type="type" value="gene"/>
</dbReference>
<dbReference type="neXtProt" id="NX_Q8NCH0"/>
<dbReference type="OpenTargets" id="ENSG00000169105"/>
<dbReference type="Orphanet" id="2953">
    <property type="disease" value="Musculocontractural Ehlers-Danlos syndrome"/>
</dbReference>
<dbReference type="PharmGKB" id="PA162382258"/>
<dbReference type="VEuPathDB" id="HostDB:ENSG00000169105"/>
<dbReference type="eggNOG" id="KOG4651">
    <property type="taxonomic scope" value="Eukaryota"/>
</dbReference>
<dbReference type="GeneTree" id="ENSGT00940000162640"/>
<dbReference type="HOGENOM" id="CLU_043398_1_3_1"/>
<dbReference type="InParanoid" id="Q8NCH0"/>
<dbReference type="OMA" id="SQKNMPH"/>
<dbReference type="OrthoDB" id="2019940at2759"/>
<dbReference type="PAN-GO" id="Q8NCH0">
    <property type="GO annotations" value="2 GO annotations based on evolutionary models"/>
</dbReference>
<dbReference type="PhylomeDB" id="Q8NCH0"/>
<dbReference type="TreeFam" id="TF325581"/>
<dbReference type="BioCyc" id="MetaCyc:ENSG00000169105-MONOMER"/>
<dbReference type="BRENDA" id="2.8.2.35">
    <property type="organism ID" value="2681"/>
</dbReference>
<dbReference type="PathwayCommons" id="Q8NCH0"/>
<dbReference type="Reactome" id="R-HSA-2022923">
    <property type="pathway name" value="Dermatan sulfate biosynthesis"/>
</dbReference>
<dbReference type="Reactome" id="R-HSA-3595174">
    <property type="pathway name" value="Defective CHST14 causes EDS, musculocontractural type"/>
</dbReference>
<dbReference type="SignaLink" id="Q8NCH0"/>
<dbReference type="BioGRID-ORCS" id="113189">
    <property type="hits" value="13 hits in 1153 CRISPR screens"/>
</dbReference>
<dbReference type="ChiTaRS" id="CHST14">
    <property type="organism name" value="human"/>
</dbReference>
<dbReference type="GeneWiki" id="CHST14"/>
<dbReference type="GenomeRNAi" id="113189"/>
<dbReference type="Pharos" id="Q8NCH0">
    <property type="development level" value="Tbio"/>
</dbReference>
<dbReference type="PRO" id="PR:Q8NCH0"/>
<dbReference type="Proteomes" id="UP000005640">
    <property type="component" value="Chromosome 15"/>
</dbReference>
<dbReference type="RNAct" id="Q8NCH0">
    <property type="molecule type" value="protein"/>
</dbReference>
<dbReference type="Bgee" id="ENSG00000169105">
    <property type="expression patterns" value="Expressed in stromal cell of endometrium and 138 other cell types or tissues"/>
</dbReference>
<dbReference type="ExpressionAtlas" id="Q8NCH0">
    <property type="expression patterns" value="baseline and differential"/>
</dbReference>
<dbReference type="GO" id="GO:0070062">
    <property type="term" value="C:extracellular exosome"/>
    <property type="evidence" value="ECO:0007005"/>
    <property type="project" value="UniProtKB"/>
</dbReference>
<dbReference type="GO" id="GO:0000139">
    <property type="term" value="C:Golgi membrane"/>
    <property type="evidence" value="ECO:0000304"/>
    <property type="project" value="Reactome"/>
</dbReference>
<dbReference type="GO" id="GO:0016020">
    <property type="term" value="C:membrane"/>
    <property type="evidence" value="ECO:0000303"/>
    <property type="project" value="UniProtKB"/>
</dbReference>
<dbReference type="GO" id="GO:0001537">
    <property type="term" value="F:dermatan 4-sulfotransferase activity"/>
    <property type="evidence" value="ECO:0000314"/>
    <property type="project" value="UniProtKB"/>
</dbReference>
<dbReference type="GO" id="GO:0042301">
    <property type="term" value="F:phosphate ion binding"/>
    <property type="evidence" value="ECO:0000303"/>
    <property type="project" value="UniProtKB"/>
</dbReference>
<dbReference type="GO" id="GO:0008146">
    <property type="term" value="F:sulfotransferase activity"/>
    <property type="evidence" value="ECO:0000318"/>
    <property type="project" value="GO_Central"/>
</dbReference>
<dbReference type="GO" id="GO:0016051">
    <property type="term" value="P:carbohydrate biosynthetic process"/>
    <property type="evidence" value="ECO:0007669"/>
    <property type="project" value="InterPro"/>
</dbReference>
<dbReference type="GO" id="GO:0050651">
    <property type="term" value="P:dermatan sulfate proteoglycan biosynthetic process"/>
    <property type="evidence" value="ECO:0000314"/>
    <property type="project" value="MGI"/>
</dbReference>
<dbReference type="GO" id="GO:0050655">
    <property type="term" value="P:dermatan sulfate proteoglycan metabolic process"/>
    <property type="evidence" value="ECO:0000314"/>
    <property type="project" value="UniProtKB"/>
</dbReference>
<dbReference type="InterPro" id="IPR018011">
    <property type="entry name" value="Carb_sulfotrans_8-10"/>
</dbReference>
<dbReference type="InterPro" id="IPR005331">
    <property type="entry name" value="Sulfotransferase"/>
</dbReference>
<dbReference type="PANTHER" id="PTHR12137">
    <property type="entry name" value="CARBOHYDRATE SULFOTRANSFERASE"/>
    <property type="match status" value="1"/>
</dbReference>
<dbReference type="PANTHER" id="PTHR12137:SF66">
    <property type="entry name" value="CARBOHYDRATE SULFOTRANSFERASE 14"/>
    <property type="match status" value="1"/>
</dbReference>
<dbReference type="Pfam" id="PF03567">
    <property type="entry name" value="Sulfotransfer_2"/>
    <property type="match status" value="1"/>
</dbReference>